<feature type="chain" id="PRO_0000433492" description="Collagen alpha-1(I) chain" evidence="4">
    <location>
        <begin position="1"/>
        <end position="847"/>
    </location>
</feature>
<feature type="region of interest" description="Disordered" evidence="3">
    <location>
        <begin position="1"/>
        <end position="847"/>
    </location>
</feature>
<feature type="compositionally biased region" description="Low complexity" evidence="3">
    <location>
        <begin position="20"/>
        <end position="39"/>
    </location>
</feature>
<feature type="compositionally biased region" description="Basic and acidic residues" evidence="3">
    <location>
        <begin position="51"/>
        <end position="65"/>
    </location>
</feature>
<feature type="compositionally biased region" description="Low complexity" evidence="3">
    <location>
        <begin position="93"/>
        <end position="109"/>
    </location>
</feature>
<feature type="compositionally biased region" description="Low complexity" evidence="3">
    <location>
        <begin position="127"/>
        <end position="145"/>
    </location>
</feature>
<feature type="compositionally biased region" description="Pro residues" evidence="3">
    <location>
        <begin position="147"/>
        <end position="159"/>
    </location>
</feature>
<feature type="compositionally biased region" description="Low complexity" evidence="3">
    <location>
        <begin position="193"/>
        <end position="208"/>
    </location>
</feature>
<feature type="compositionally biased region" description="Low complexity" evidence="3">
    <location>
        <begin position="219"/>
        <end position="228"/>
    </location>
</feature>
<feature type="compositionally biased region" description="Low complexity" evidence="3">
    <location>
        <begin position="298"/>
        <end position="314"/>
    </location>
</feature>
<feature type="compositionally biased region" description="Low complexity" evidence="3">
    <location>
        <begin position="334"/>
        <end position="343"/>
    </location>
</feature>
<feature type="compositionally biased region" description="Low complexity" evidence="3">
    <location>
        <begin position="500"/>
        <end position="543"/>
    </location>
</feature>
<feature type="compositionally biased region" description="Low complexity" evidence="3">
    <location>
        <begin position="551"/>
        <end position="599"/>
    </location>
</feature>
<feature type="compositionally biased region" description="Low complexity" evidence="3">
    <location>
        <begin position="628"/>
        <end position="638"/>
    </location>
</feature>
<feature type="compositionally biased region" description="Pro residues" evidence="3">
    <location>
        <begin position="685"/>
        <end position="695"/>
    </location>
</feature>
<feature type="compositionally biased region" description="Low complexity" evidence="3">
    <location>
        <begin position="697"/>
        <end position="712"/>
    </location>
</feature>
<feature type="compositionally biased region" description="Pro residues" evidence="3">
    <location>
        <begin position="731"/>
        <end position="746"/>
    </location>
</feature>
<feature type="compositionally biased region" description="Low complexity" evidence="3">
    <location>
        <begin position="763"/>
        <end position="777"/>
    </location>
</feature>
<feature type="compositionally biased region" description="Basic and acidic residues" evidence="3">
    <location>
        <begin position="778"/>
        <end position="789"/>
    </location>
</feature>
<feature type="compositionally biased region" description="Low complexity" evidence="3">
    <location>
        <begin position="793"/>
        <end position="838"/>
    </location>
</feature>
<feature type="modified residue" description="Phosphoserine" evidence="2">
    <location>
        <position position="85"/>
    </location>
</feature>
<feature type="modified residue" description="Phosphoserine" evidence="2">
    <location>
        <position position="501"/>
    </location>
</feature>
<feature type="unsure residue" description="I or L" evidence="4">
    <location>
        <position position="11"/>
    </location>
</feature>
<feature type="unsure residue" description="I or L" evidence="4">
    <location>
        <position position="87"/>
    </location>
</feature>
<feature type="unsure residue" description="I or L" evidence="4">
    <location>
        <position position="120"/>
    </location>
</feature>
<feature type="unsure residue" description="I or L" evidence="4">
    <location>
        <position position="248"/>
    </location>
</feature>
<feature type="unsure residue" description="I or L" evidence="4">
    <location>
        <position position="271"/>
    </location>
</feature>
<feature type="unsure residue" description="I or L" evidence="4">
    <location>
        <position position="301"/>
    </location>
</feature>
<feature type="unsure residue" description="I or L" evidence="4">
    <location>
        <position position="407"/>
    </location>
</feature>
<feature type="unsure residue" description="I or L" evidence="4">
    <location>
        <position position="450"/>
    </location>
</feature>
<feature type="unsure residue" description="I or L" evidence="4">
    <location>
        <position position="462"/>
    </location>
</feature>
<feature type="unsure residue" description="I or L" evidence="4">
    <location>
        <position position="479"/>
    </location>
</feature>
<feature type="unsure residue" description="I or L" evidence="4">
    <location>
        <position position="483"/>
    </location>
</feature>
<feature type="unsure residue" description="I or L" evidence="4">
    <location>
        <position position="558"/>
    </location>
</feature>
<feature type="unsure residue" description="I or L" evidence="4">
    <location>
        <position position="561"/>
    </location>
</feature>
<feature type="unsure residue" description="I or L" evidence="4">
    <location>
        <position position="646"/>
    </location>
</feature>
<feature type="unsure residue" description="I or L" evidence="4">
    <location>
        <position position="655"/>
    </location>
</feature>
<feature type="unsure residue" description="I or L" evidence="4">
    <location>
        <position position="664"/>
    </location>
</feature>
<feature type="unsure residue" description="I or L" evidence="4">
    <location>
        <position position="694"/>
    </location>
</feature>
<feature type="unsure residue" description="I or L" evidence="4">
    <location>
        <position position="795"/>
    </location>
</feature>
<feature type="unsure residue" description="I or L" evidence="4">
    <location>
        <position position="834"/>
    </location>
</feature>
<feature type="unsure residue" description="I or L" evidence="4">
    <location>
        <position position="837"/>
    </location>
</feature>
<feature type="unsure residue" description="I or L" evidence="4">
    <location>
        <position position="841"/>
    </location>
</feature>
<feature type="non-consecutive residues" evidence="5">
    <location>
        <begin position="75"/>
        <end position="76"/>
    </location>
</feature>
<feature type="non-consecutive residues" evidence="5">
    <location>
        <begin position="213"/>
        <end position="214"/>
    </location>
</feature>
<feature type="non-consecutive residues" evidence="5">
    <location>
        <begin position="240"/>
        <end position="241"/>
    </location>
</feature>
<feature type="non-consecutive residues" evidence="5">
    <location>
        <begin position="263"/>
        <end position="264"/>
    </location>
</feature>
<feature type="non-consecutive residues" evidence="5">
    <location>
        <begin position="278"/>
        <end position="279"/>
    </location>
</feature>
<feature type="non-consecutive residues" evidence="5">
    <location>
        <begin position="290"/>
        <end position="291"/>
    </location>
</feature>
<feature type="non-consecutive residues" evidence="5">
    <location>
        <begin position="299"/>
        <end position="300"/>
    </location>
</feature>
<feature type="non-consecutive residues" evidence="5">
    <location>
        <begin position="325"/>
        <end position="326"/>
    </location>
</feature>
<feature type="non-consecutive residues" evidence="5">
    <location>
        <begin position="394"/>
        <end position="395"/>
    </location>
</feature>
<feature type="non-consecutive residues" evidence="5">
    <location>
        <begin position="405"/>
        <end position="406"/>
    </location>
</feature>
<feature type="non-consecutive residues" evidence="5">
    <location>
        <begin position="449"/>
        <end position="450"/>
    </location>
</feature>
<feature type="non-consecutive residues" evidence="5">
    <location>
        <begin position="477"/>
        <end position="478"/>
    </location>
</feature>
<feature type="non-consecutive residues" evidence="5">
    <location>
        <begin position="510"/>
        <end position="511"/>
    </location>
</feature>
<feature type="non-consecutive residues" evidence="5">
    <location>
        <begin position="623"/>
        <end position="624"/>
    </location>
</feature>
<feature type="non-consecutive residues" evidence="5">
    <location>
        <begin position="659"/>
        <end position="660"/>
    </location>
</feature>
<feature type="non-consecutive residues" evidence="5">
    <location>
        <begin position="751"/>
        <end position="752"/>
    </location>
</feature>
<feature type="non-consecutive residues" evidence="5">
    <location>
        <begin position="790"/>
        <end position="791"/>
    </location>
</feature>
<reference evidence="6" key="1">
    <citation type="journal article" date="2015" name="Nature">
        <title>Ancient proteins resolve the evolutionary history of Darwin's South American ungulates.</title>
        <authorList>
            <person name="Welker F."/>
            <person name="Collins M.J."/>
            <person name="Thomas J.A."/>
            <person name="Wadsley M."/>
            <person name="Brace S."/>
            <person name="Cappellini E."/>
            <person name="Turvey S.T."/>
            <person name="Reguero M."/>
            <person name="Gelfo J.N."/>
            <person name="Kramarz A."/>
            <person name="Burger J."/>
            <person name="Thomas-Oates J."/>
            <person name="Ashford D.A."/>
            <person name="Ashton P.D."/>
            <person name="Rowsell K."/>
            <person name="Porter D.M."/>
            <person name="Kessler B."/>
            <person name="Fischer R."/>
            <person name="Baessmann C."/>
            <person name="Kaspar S."/>
            <person name="Olsen J.V."/>
            <person name="Kiley P."/>
            <person name="Elliott J.A."/>
            <person name="Kelstrup C.D."/>
            <person name="Mullin V."/>
            <person name="Hofreiter M."/>
            <person name="Willerslev E."/>
            <person name="Hublin J.J."/>
            <person name="Orlando L."/>
            <person name="Barnes I."/>
            <person name="MacPhee R.D."/>
        </authorList>
    </citation>
    <scope>PROTEIN SEQUENCE</scope>
    <scope>IDENTIFICATION BY MASS SPECTROMETRY</scope>
    <source>
        <tissue evidence="5">Bone</tissue>
    </source>
</reference>
<evidence type="ECO:0000250" key="1">
    <source>
        <dbReference type="UniProtKB" id="P02452"/>
    </source>
</evidence>
<evidence type="ECO:0000250" key="2">
    <source>
        <dbReference type="UniProtKB" id="P02454"/>
    </source>
</evidence>
<evidence type="ECO:0000256" key="3">
    <source>
        <dbReference type="SAM" id="MobiDB-lite"/>
    </source>
</evidence>
<evidence type="ECO:0000269" key="4">
    <source>
    </source>
</evidence>
<evidence type="ECO:0000303" key="5">
    <source>
    </source>
</evidence>
<evidence type="ECO:0000305" key="6"/>
<dbReference type="GO" id="GO:0005581">
    <property type="term" value="C:collagen trimer"/>
    <property type="evidence" value="ECO:0007669"/>
    <property type="project" value="UniProtKB-KW"/>
</dbReference>
<dbReference type="GO" id="GO:0031012">
    <property type="term" value="C:extracellular matrix"/>
    <property type="evidence" value="ECO:0007669"/>
    <property type="project" value="TreeGrafter"/>
</dbReference>
<dbReference type="GO" id="GO:0005615">
    <property type="term" value="C:extracellular space"/>
    <property type="evidence" value="ECO:0007669"/>
    <property type="project" value="TreeGrafter"/>
</dbReference>
<dbReference type="GO" id="GO:0030020">
    <property type="term" value="F:extracellular matrix structural constituent conferring tensile strength"/>
    <property type="evidence" value="ECO:0007669"/>
    <property type="project" value="TreeGrafter"/>
</dbReference>
<dbReference type="GO" id="GO:0030198">
    <property type="term" value="P:extracellular matrix organization"/>
    <property type="evidence" value="ECO:0007669"/>
    <property type="project" value="TreeGrafter"/>
</dbReference>
<dbReference type="InterPro" id="IPR008160">
    <property type="entry name" value="Collagen"/>
</dbReference>
<dbReference type="InterPro" id="IPR050149">
    <property type="entry name" value="Collagen_superfamily"/>
</dbReference>
<dbReference type="PANTHER" id="PTHR24023">
    <property type="entry name" value="COLLAGEN ALPHA"/>
    <property type="match status" value="1"/>
</dbReference>
<dbReference type="PANTHER" id="PTHR24023:SF1082">
    <property type="entry name" value="COLLAGEN TRIPLE HELIX REPEAT"/>
    <property type="match status" value="1"/>
</dbReference>
<dbReference type="Pfam" id="PF01391">
    <property type="entry name" value="Collagen"/>
    <property type="match status" value="12"/>
</dbReference>
<proteinExistence type="evidence at protein level"/>
<protein>
    <recommendedName>
        <fullName evidence="5">Collagen alpha-1(I) chain</fullName>
    </recommendedName>
    <alternativeName>
        <fullName evidence="1">Alpha-1 type I collagen</fullName>
    </alternativeName>
</protein>
<gene>
    <name evidence="1" type="primary">COL1A1</name>
</gene>
<accession>C0HJP1</accession>
<keyword id="KW-0106">Calcium</keyword>
<keyword id="KW-0176">Collagen</keyword>
<keyword id="KW-0903">Direct protein sequencing</keyword>
<keyword id="KW-0272">Extracellular matrix</keyword>
<keyword id="KW-0379">Hydroxylation</keyword>
<keyword id="KW-0597">Phosphoprotein</keyword>
<keyword id="KW-0677">Repeat</keyword>
<keyword id="KW-0964">Secreted</keyword>
<sequence length="847" mass="75274">GPMGPSGPRGIPGPPGSPGPQGFQGPPGEPGEPGSSGPMGPRGPPGPPGKNGDDGEAGKPGRPGERGPSGPQGPRPGMKGHRGFSGIDGAKGDAGPAGPKGEPGSPGENGAPGQMGPRGIPGERGRPGASGPAGARGNDGATGAAGPPGPTGPAGPPGFPGAVGAKGEAGPQGARGSEGPQGVRGEPGPPGPAGAAGPAGNPGADGQPGAKGAGPSGPQGPSGAPGPKGNSGEPGAPGNKGEPGPTGIQGPPGPAGEEGKRGAGEPGPTGIPGPPGERGFPGADGVAGPKGSPGPAGPKGITGSPGSPGPDGKTGPPGPAGQDGRGQAGVMGFPGPKGAAGEPGKAGERGVPGPPGAAGPAGKDGEAGAQGPPGPAGPAGERGEQGPAGSPGFQGPAGPPGEAGKDIGAPGPSGARGERGFPGERGVQGPPGPAGPRGSNGAPGNDGAKIQGMPGERGAAGIPGPKGDRGDSGPKGAGITGPIGPPGPAGATGDKGETGPSGPAGPTGARGPPGPAGFAGPPGADGQPGAKGEPGDAGAKGDAGPPGPAGPTGAPGPIGNIGAPGPKGARGSAGPPGATGFPGAAGRVGPPGPSGNAGAPGPPGPAGKEGGKGPRGETGPAGRGEKGSPGADGPAGAPGTPGPQGISGQRGVVGIPGQRGFPGIPGPSGEPGKQGPSGSSGERGPPGPMGPPGIAGPPGESGREGSPGAEGSPGRDGSPGPKGDRGETGPSGPPGAPGAPGAPGPVGPAGKGETGPAGPAGPAGPAGARGPSGPQGPRGDKGETGEQGDRGFSGIQGPPGAPGSPGEQGPSGASGPAGPRGPPGSAGSPGKDGINGIPGPIGPPGPR</sequence>
<name>CO1A1_CYCDI</name>
<comment type="function">
    <text evidence="6">Type I collagen is a member of group I collagen (fibrillar forming collagen).</text>
</comment>
<comment type="subunit">
    <text evidence="6">Trimers of one alpha 2(I) and two alpha 1(I) chains.</text>
</comment>
<comment type="subcellular location">
    <subcellularLocation>
        <location>Secreted</location>
    </subcellularLocation>
    <subcellularLocation>
        <location>Secreted</location>
        <location>Extracellular space</location>
    </subcellularLocation>
    <subcellularLocation>
        <location evidence="6">Secreted</location>
        <location evidence="6">Extracellular space</location>
        <location evidence="6">Extracellular matrix</location>
    </subcellularLocation>
</comment>
<comment type="tissue specificity">
    <text evidence="6">Forms the fibrils of tendon, ligaments and bones. In bones, the fibrils are mineralized with calcium hydroxyapatite.</text>
</comment>
<comment type="PTM">
    <text evidence="6">Prolines at the third position of the tripeptide repeating unit (G-X-Y) are hydroxylated in some or all of the chains.</text>
</comment>
<comment type="similarity">
    <text evidence="6">Belongs to the fibrillar collagen family.</text>
</comment>
<organism evidence="5">
    <name type="scientific">Cyclopes didactylus</name>
    <name type="common">Silky anteater</name>
    <name type="synonym">Myrmecophaga didactyla</name>
    <dbReference type="NCBI Taxonomy" id="84074"/>
    <lineage>
        <taxon>Eukaryota</taxon>
        <taxon>Metazoa</taxon>
        <taxon>Chordata</taxon>
        <taxon>Craniata</taxon>
        <taxon>Vertebrata</taxon>
        <taxon>Euteleostomi</taxon>
        <taxon>Mammalia</taxon>
        <taxon>Eutheria</taxon>
        <taxon>Xenarthra</taxon>
        <taxon>Pilosa</taxon>
        <taxon>Vermilingua</taxon>
        <taxon>Cyclopedidae</taxon>
        <taxon>Cyclopes</taxon>
    </lineage>
</organism>